<proteinExistence type="inferred from homology"/>
<evidence type="ECO:0000255" key="1">
    <source>
        <dbReference type="HAMAP-Rule" id="MF_00020"/>
    </source>
</evidence>
<comment type="function">
    <text evidence="1">Catalyzes the formation of acetyl phosphate from acetate and ATP. Can also catalyze the reverse reaction.</text>
</comment>
<comment type="catalytic activity">
    <reaction evidence="1">
        <text>acetate + ATP = acetyl phosphate + ADP</text>
        <dbReference type="Rhea" id="RHEA:11352"/>
        <dbReference type="ChEBI" id="CHEBI:22191"/>
        <dbReference type="ChEBI" id="CHEBI:30089"/>
        <dbReference type="ChEBI" id="CHEBI:30616"/>
        <dbReference type="ChEBI" id="CHEBI:456216"/>
        <dbReference type="EC" id="2.7.2.1"/>
    </reaction>
</comment>
<comment type="cofactor">
    <cofactor evidence="1">
        <name>Mg(2+)</name>
        <dbReference type="ChEBI" id="CHEBI:18420"/>
    </cofactor>
    <cofactor evidence="1">
        <name>Mn(2+)</name>
        <dbReference type="ChEBI" id="CHEBI:29035"/>
    </cofactor>
    <text evidence="1">Mg(2+). Can also accept Mn(2+).</text>
</comment>
<comment type="pathway">
    <text evidence="1">Metabolic intermediate biosynthesis; acetyl-CoA biosynthesis; acetyl-CoA from acetate: step 1/2.</text>
</comment>
<comment type="subunit">
    <text evidence="1">Homodimer.</text>
</comment>
<comment type="subcellular location">
    <subcellularLocation>
        <location evidence="1">Cytoplasm</location>
    </subcellularLocation>
</comment>
<comment type="similarity">
    <text evidence="1">Belongs to the acetokinase family.</text>
</comment>
<dbReference type="EC" id="2.7.2.1" evidence="1"/>
<dbReference type="EMBL" id="CP000776">
    <property type="protein sequence ID" value="ABS51966.1"/>
    <property type="molecule type" value="Genomic_DNA"/>
</dbReference>
<dbReference type="RefSeq" id="WP_012109017.1">
    <property type="nucleotide sequence ID" value="NC_009714.1"/>
</dbReference>
<dbReference type="SMR" id="A7I2H6"/>
<dbReference type="STRING" id="360107.CHAB381_1162"/>
<dbReference type="KEGG" id="cha:CHAB381_1162"/>
<dbReference type="eggNOG" id="COG0282">
    <property type="taxonomic scope" value="Bacteria"/>
</dbReference>
<dbReference type="HOGENOM" id="CLU_020352_0_1_7"/>
<dbReference type="OrthoDB" id="9802453at2"/>
<dbReference type="UniPathway" id="UPA00340">
    <property type="reaction ID" value="UER00458"/>
</dbReference>
<dbReference type="Proteomes" id="UP000002407">
    <property type="component" value="Chromosome"/>
</dbReference>
<dbReference type="GO" id="GO:0005737">
    <property type="term" value="C:cytoplasm"/>
    <property type="evidence" value="ECO:0007669"/>
    <property type="project" value="UniProtKB-SubCell"/>
</dbReference>
<dbReference type="GO" id="GO:0008776">
    <property type="term" value="F:acetate kinase activity"/>
    <property type="evidence" value="ECO:0007669"/>
    <property type="project" value="UniProtKB-UniRule"/>
</dbReference>
<dbReference type="GO" id="GO:0005524">
    <property type="term" value="F:ATP binding"/>
    <property type="evidence" value="ECO:0007669"/>
    <property type="project" value="UniProtKB-KW"/>
</dbReference>
<dbReference type="GO" id="GO:0000287">
    <property type="term" value="F:magnesium ion binding"/>
    <property type="evidence" value="ECO:0007669"/>
    <property type="project" value="UniProtKB-UniRule"/>
</dbReference>
<dbReference type="GO" id="GO:0006083">
    <property type="term" value="P:acetate metabolic process"/>
    <property type="evidence" value="ECO:0007669"/>
    <property type="project" value="TreeGrafter"/>
</dbReference>
<dbReference type="GO" id="GO:0006085">
    <property type="term" value="P:acetyl-CoA biosynthetic process"/>
    <property type="evidence" value="ECO:0007669"/>
    <property type="project" value="UniProtKB-UniRule"/>
</dbReference>
<dbReference type="CDD" id="cd24010">
    <property type="entry name" value="ASKHA_NBD_AcK_PK"/>
    <property type="match status" value="1"/>
</dbReference>
<dbReference type="Gene3D" id="3.30.420.40">
    <property type="match status" value="2"/>
</dbReference>
<dbReference type="HAMAP" id="MF_00020">
    <property type="entry name" value="Acetate_kinase"/>
    <property type="match status" value="1"/>
</dbReference>
<dbReference type="InterPro" id="IPR004372">
    <property type="entry name" value="Ac/propionate_kinase"/>
</dbReference>
<dbReference type="InterPro" id="IPR000890">
    <property type="entry name" value="Aliphatic_acid_kin_short-chain"/>
</dbReference>
<dbReference type="InterPro" id="IPR023865">
    <property type="entry name" value="Aliphatic_acid_kinase_CS"/>
</dbReference>
<dbReference type="InterPro" id="IPR043129">
    <property type="entry name" value="ATPase_NBD"/>
</dbReference>
<dbReference type="NCBIfam" id="TIGR00016">
    <property type="entry name" value="ackA"/>
    <property type="match status" value="1"/>
</dbReference>
<dbReference type="PANTHER" id="PTHR21060">
    <property type="entry name" value="ACETATE KINASE"/>
    <property type="match status" value="1"/>
</dbReference>
<dbReference type="PANTHER" id="PTHR21060:SF15">
    <property type="entry name" value="ACETATE KINASE-RELATED"/>
    <property type="match status" value="1"/>
</dbReference>
<dbReference type="Pfam" id="PF00871">
    <property type="entry name" value="Acetate_kinase"/>
    <property type="match status" value="1"/>
</dbReference>
<dbReference type="PIRSF" id="PIRSF000722">
    <property type="entry name" value="Acetate_prop_kin"/>
    <property type="match status" value="1"/>
</dbReference>
<dbReference type="PRINTS" id="PR00471">
    <property type="entry name" value="ACETATEKNASE"/>
</dbReference>
<dbReference type="SUPFAM" id="SSF53067">
    <property type="entry name" value="Actin-like ATPase domain"/>
    <property type="match status" value="2"/>
</dbReference>
<dbReference type="PROSITE" id="PS01075">
    <property type="entry name" value="ACETATE_KINASE_1"/>
    <property type="match status" value="1"/>
</dbReference>
<dbReference type="PROSITE" id="PS01076">
    <property type="entry name" value="ACETATE_KINASE_2"/>
    <property type="match status" value="1"/>
</dbReference>
<feature type="chain" id="PRO_1000089964" description="Acetate kinase">
    <location>
        <begin position="1"/>
        <end position="399"/>
    </location>
</feature>
<feature type="active site" description="Proton donor/acceptor" evidence="1">
    <location>
        <position position="146"/>
    </location>
</feature>
<feature type="binding site" evidence="1">
    <location>
        <position position="7"/>
    </location>
    <ligand>
        <name>Mg(2+)</name>
        <dbReference type="ChEBI" id="CHEBI:18420"/>
    </ligand>
</feature>
<feature type="binding site" evidence="1">
    <location>
        <position position="14"/>
    </location>
    <ligand>
        <name>ATP</name>
        <dbReference type="ChEBI" id="CHEBI:30616"/>
    </ligand>
</feature>
<feature type="binding site" evidence="1">
    <location>
        <position position="89"/>
    </location>
    <ligand>
        <name>substrate</name>
    </ligand>
</feature>
<feature type="binding site" evidence="1">
    <location>
        <begin position="206"/>
        <end position="210"/>
    </location>
    <ligand>
        <name>ATP</name>
        <dbReference type="ChEBI" id="CHEBI:30616"/>
    </ligand>
</feature>
<feature type="binding site" evidence="1">
    <location>
        <begin position="280"/>
        <end position="282"/>
    </location>
    <ligand>
        <name>ATP</name>
        <dbReference type="ChEBI" id="CHEBI:30616"/>
    </ligand>
</feature>
<feature type="binding site" evidence="1">
    <location>
        <begin position="328"/>
        <end position="332"/>
    </location>
    <ligand>
        <name>ATP</name>
        <dbReference type="ChEBI" id="CHEBI:30616"/>
    </ligand>
</feature>
<feature type="binding site" evidence="1">
    <location>
        <position position="382"/>
    </location>
    <ligand>
        <name>Mg(2+)</name>
        <dbReference type="ChEBI" id="CHEBI:18420"/>
    </ligand>
</feature>
<feature type="site" description="Transition state stabilizer" evidence="1">
    <location>
        <position position="178"/>
    </location>
</feature>
<feature type="site" description="Transition state stabilizer" evidence="1">
    <location>
        <position position="239"/>
    </location>
</feature>
<accession>A7I2H6</accession>
<sequence length="399" mass="44298">MKILVINSGSSSIKFKFYDLKIQKCLASGMIEQIGDEVSHSKIETCDGKTIEENMEIRTHDEGIVILNRYLKETGVLTDLKEIDGVGHRIVQGADYFEGPALVDDDVITKIEELIPLAPLHNPAHLSGIRSSLRHAPCLPNVVVFDNTFYHNIPDYAYMYALPYKFYEKYRVRKFGAHGISHEFVTKKGADFLGIDYKNFCVISLHIGSGSSISATKDGICIDTSMGLTPLEGLMMSTRCGSVDPAIIPYMKRVAGYLSEDIDTIMNKKSGLLGITGTSDFRKVLERMHKGDERAKLAFDMLTYQIVKIIGSYYAILPRVDAIIWTAGIGENSAELRESVSKRLAHFGVGVDETVNVNCIKKPTDISSQNATIKTLVIPTDEEYSIAKATERILLSLKK</sequence>
<reference key="1">
    <citation type="submission" date="2007-07" db="EMBL/GenBank/DDBJ databases">
        <title>Complete genome sequence of Campylobacter hominis ATCC BAA-381, a commensal isolated from the human gastrointestinal tract.</title>
        <authorList>
            <person name="Fouts D.E."/>
            <person name="Mongodin E.F."/>
            <person name="Puiu D."/>
            <person name="Sebastian Y."/>
            <person name="Miller W.G."/>
            <person name="Mandrell R.E."/>
            <person name="Nelson K.E."/>
        </authorList>
    </citation>
    <scope>NUCLEOTIDE SEQUENCE [LARGE SCALE GENOMIC DNA]</scope>
    <source>
        <strain>ATCC BAA-381 / DSM 21671 / CCUG 45161 / LMG 19568 / NCTC 13146 / CH001A</strain>
    </source>
</reference>
<keyword id="KW-0067">ATP-binding</keyword>
<keyword id="KW-0963">Cytoplasm</keyword>
<keyword id="KW-0418">Kinase</keyword>
<keyword id="KW-0460">Magnesium</keyword>
<keyword id="KW-0479">Metal-binding</keyword>
<keyword id="KW-0547">Nucleotide-binding</keyword>
<keyword id="KW-1185">Reference proteome</keyword>
<keyword id="KW-0808">Transferase</keyword>
<gene>
    <name evidence="1" type="primary">ackA</name>
    <name type="ordered locus">CHAB381_1162</name>
</gene>
<protein>
    <recommendedName>
        <fullName evidence="1">Acetate kinase</fullName>
        <ecNumber evidence="1">2.7.2.1</ecNumber>
    </recommendedName>
    <alternativeName>
        <fullName evidence="1">Acetokinase</fullName>
    </alternativeName>
</protein>
<organism>
    <name type="scientific">Campylobacter hominis (strain ATCC BAA-381 / DSM 21671 / CCUG 45161 / LMG 19568 / NCTC 13146 / CH001A)</name>
    <dbReference type="NCBI Taxonomy" id="360107"/>
    <lineage>
        <taxon>Bacteria</taxon>
        <taxon>Pseudomonadati</taxon>
        <taxon>Campylobacterota</taxon>
        <taxon>Epsilonproteobacteria</taxon>
        <taxon>Campylobacterales</taxon>
        <taxon>Campylobacteraceae</taxon>
        <taxon>Campylobacter</taxon>
    </lineage>
</organism>
<name>ACKA_CAMHC</name>